<comment type="function">
    <text evidence="3">Catalyzes the oxidation of (S)-2-hydroxyglutarate to 2-oxoglutarate. Is specific for the (S) enantiomer and possesses very poor activity toward (R)-2-hydroxyglutarate. Has no activity toward related 2-hydroxy acids, such as glycolate, L-lactate or D-lactate.</text>
</comment>
<comment type="catalytic activity">
    <reaction evidence="3">
        <text>(S)-2-hydroxyglutarate + A = 2-oxoglutarate + AH2</text>
        <dbReference type="Rhea" id="RHEA:21252"/>
        <dbReference type="ChEBI" id="CHEBI:13193"/>
        <dbReference type="ChEBI" id="CHEBI:16782"/>
        <dbReference type="ChEBI" id="CHEBI:16810"/>
        <dbReference type="ChEBI" id="CHEBI:17499"/>
        <dbReference type="EC" id="1.1.99.2"/>
    </reaction>
</comment>
<comment type="cofactor">
    <cofactor evidence="3">
        <name>FAD</name>
        <dbReference type="ChEBI" id="CHEBI:57692"/>
    </cofactor>
</comment>
<comment type="biophysicochemical properties">
    <kinetics>
        <KM evidence="3">0.24 mM for (S)-2-hydroxyglutarate (with DCIP as acceptor molecule)</KM>
        <Vmax evidence="3">0.52 mmol/min/mg enzyme toward (S)-2-hydroxyglutarate (with DCIP as acceptor molecule)</Vmax>
    </kinetics>
    <phDependence>
        <text evidence="3">Optimum pH is 7.4.</text>
    </phDependence>
</comment>
<comment type="subcellular location">
    <subcellularLocation>
        <location evidence="2">Mitochondrion</location>
    </subcellularLocation>
</comment>
<comment type="disruption phenotype">
    <text evidence="3">No visible phenotype under normal growth conditions.</text>
</comment>
<comment type="similarity">
    <text evidence="5">Belongs to the L2HGDH family.</text>
</comment>
<keyword id="KW-0274">FAD</keyword>
<keyword id="KW-0285">Flavoprotein</keyword>
<keyword id="KW-0496">Mitochondrion</keyword>
<keyword id="KW-0560">Oxidoreductase</keyword>
<keyword id="KW-1185">Reference proteome</keyword>
<keyword id="KW-0809">Transit peptide</keyword>
<accession>Q9LES4</accession>
<sequence>MKHKPETAAFSLIRPLEAWAANANKACNTKKMLPCLGRKWMRLSTRNLKPTWNLINVVDASKTIVRGISGGAETIAKERVDTVVIGAGVVGLAVARELSLRGREVLILDAASSFGTVTSSRNSEVVHAGIYYPPNSLKAKFCVRGRELLYKYCSEYEIPHKKIGKLIVATGSSEIPKLDLLMHLGTQNRVSGLRMLEGFEAMRMEPQLRCVKALLSPESGILDTHSFMLSLVEKSFDFMVYRDNNNLRLQGEAQNNHATFSYNTVVLNGRVEEKKMHLYVADTRFSESRCEAEAQLELIPNLVVNSAGLGAQALAKRLHGLDHRFVPSSHYARGCYFTLSGIKAPPFNKLVYPIPEEGGLGVHVTVDLNGLVKFGPDVEWIECTDDTSSFLNKFDYRVNPQRSEKFYPEIRKYYPDLKDGSLEPGYSGIRPKLSGPKQSPADFVIQGEETHGVPGLVNLFGIESPGLTSSLAIAEHIANKFLR</sequence>
<gene>
    <name evidence="4" type="primary">L2HGDH</name>
    <name evidence="6" type="ordered locus">At3g56840</name>
    <name evidence="7" type="ORF">T8M16_170</name>
</gene>
<dbReference type="EC" id="1.1.99.2" evidence="3"/>
<dbReference type="EMBL" id="AL390921">
    <property type="protein sequence ID" value="CAC00747.1"/>
    <property type="molecule type" value="Genomic_DNA"/>
</dbReference>
<dbReference type="EMBL" id="CP002686">
    <property type="status" value="NOT_ANNOTATED_CDS"/>
    <property type="molecule type" value="Genomic_DNA"/>
</dbReference>
<dbReference type="PIR" id="T51272">
    <property type="entry name" value="T51272"/>
</dbReference>
<dbReference type="SMR" id="Q9LES4"/>
<dbReference type="FunCoup" id="Q9LES4">
    <property type="interactions" value="2173"/>
</dbReference>
<dbReference type="STRING" id="3702.Q9LES4"/>
<dbReference type="PaxDb" id="3702-AT3G56840.1"/>
<dbReference type="Araport" id="AT3G56840"/>
<dbReference type="TAIR" id="AT3G56840"/>
<dbReference type="eggNOG" id="KOG2665">
    <property type="taxonomic scope" value="Eukaryota"/>
</dbReference>
<dbReference type="HOGENOM" id="CLU_024775_1_0_1"/>
<dbReference type="InParanoid" id="Q9LES4"/>
<dbReference type="PhylomeDB" id="Q9LES4"/>
<dbReference type="BioCyc" id="ARA:AT3G56840-MONOMER"/>
<dbReference type="PRO" id="PR:Q9LES4"/>
<dbReference type="Proteomes" id="UP000006548">
    <property type="component" value="Chromosome 3"/>
</dbReference>
<dbReference type="ExpressionAtlas" id="Q9LES4">
    <property type="expression patterns" value="baseline and differential"/>
</dbReference>
<dbReference type="GO" id="GO:0005739">
    <property type="term" value="C:mitochondrion"/>
    <property type="evidence" value="ECO:0007669"/>
    <property type="project" value="UniProtKB-SubCell"/>
</dbReference>
<dbReference type="GO" id="GO:0003973">
    <property type="term" value="F:(S)-2-hydroxy-acid oxidase activity"/>
    <property type="evidence" value="ECO:0000315"/>
    <property type="project" value="TAIR"/>
</dbReference>
<dbReference type="GO" id="GO:0047545">
    <property type="term" value="F:2-hydroxyglutarate dehydrogenase activity"/>
    <property type="evidence" value="ECO:0000314"/>
    <property type="project" value="UniProtKB"/>
</dbReference>
<dbReference type="GO" id="GO:0071949">
    <property type="term" value="F:FAD binding"/>
    <property type="evidence" value="ECO:0000314"/>
    <property type="project" value="UniProtKB"/>
</dbReference>
<dbReference type="Gene3D" id="3.30.9.10">
    <property type="entry name" value="D-Amino Acid Oxidase, subunit A, domain 2"/>
    <property type="match status" value="1"/>
</dbReference>
<dbReference type="Gene3D" id="3.50.50.60">
    <property type="entry name" value="FAD/NAD(P)-binding domain"/>
    <property type="match status" value="1"/>
</dbReference>
<dbReference type="InterPro" id="IPR006076">
    <property type="entry name" value="FAD-dep_OxRdtase"/>
</dbReference>
<dbReference type="InterPro" id="IPR036188">
    <property type="entry name" value="FAD/NAD-bd_sf"/>
</dbReference>
<dbReference type="PANTHER" id="PTHR43104">
    <property type="entry name" value="L-2-HYDROXYGLUTARATE DEHYDROGENASE, MITOCHONDRIAL"/>
    <property type="match status" value="1"/>
</dbReference>
<dbReference type="PANTHER" id="PTHR43104:SF4">
    <property type="entry name" value="L-2-HYDROXYGLUTARATE DEHYDROGENASE, MITOCHONDRIAL"/>
    <property type="match status" value="1"/>
</dbReference>
<dbReference type="Pfam" id="PF01266">
    <property type="entry name" value="DAO"/>
    <property type="match status" value="1"/>
</dbReference>
<dbReference type="SUPFAM" id="SSF51905">
    <property type="entry name" value="FAD/NAD(P)-binding domain"/>
    <property type="match status" value="1"/>
</dbReference>
<protein>
    <recommendedName>
        <fullName evidence="5">L-2-hydroxyglutarate dehydrogenase, mitochondrial</fullName>
        <ecNumber evidence="3">1.1.99.2</ecNumber>
    </recommendedName>
</protein>
<feature type="transit peptide" description="Mitochondrion" evidence="1">
    <location>
        <begin position="1"/>
        <end position="67"/>
    </location>
</feature>
<feature type="chain" id="PRO_0000438327" description="L-2-hydroxyglutarate dehydrogenase, mitochondrial">
    <location>
        <begin position="68"/>
        <end position="483"/>
    </location>
</feature>
<evidence type="ECO:0000255" key="1"/>
<evidence type="ECO:0000269" key="2">
    <source>
    </source>
</evidence>
<evidence type="ECO:0000269" key="3">
    <source>
    </source>
</evidence>
<evidence type="ECO:0000303" key="4">
    <source>
    </source>
</evidence>
<evidence type="ECO:0000305" key="5"/>
<evidence type="ECO:0000312" key="6">
    <source>
        <dbReference type="Araport" id="AT3G56840"/>
    </source>
</evidence>
<evidence type="ECO:0000312" key="7">
    <source>
        <dbReference type="EMBL" id="CAC00747.1"/>
    </source>
</evidence>
<organism>
    <name type="scientific">Arabidopsis thaliana</name>
    <name type="common">Mouse-ear cress</name>
    <dbReference type="NCBI Taxonomy" id="3702"/>
    <lineage>
        <taxon>Eukaryota</taxon>
        <taxon>Viridiplantae</taxon>
        <taxon>Streptophyta</taxon>
        <taxon>Embryophyta</taxon>
        <taxon>Tracheophyta</taxon>
        <taxon>Spermatophyta</taxon>
        <taxon>Magnoliopsida</taxon>
        <taxon>eudicotyledons</taxon>
        <taxon>Gunneridae</taxon>
        <taxon>Pentapetalae</taxon>
        <taxon>rosids</taxon>
        <taxon>malvids</taxon>
        <taxon>Brassicales</taxon>
        <taxon>Brassicaceae</taxon>
        <taxon>Camelineae</taxon>
        <taxon>Arabidopsis</taxon>
    </lineage>
</organism>
<proteinExistence type="evidence at protein level"/>
<name>L2HDH_ARATH</name>
<reference key="1">
    <citation type="journal article" date="2000" name="Nature">
        <title>Sequence and analysis of chromosome 3 of the plant Arabidopsis thaliana.</title>
        <authorList>
            <person name="Salanoubat M."/>
            <person name="Lemcke K."/>
            <person name="Rieger M."/>
            <person name="Ansorge W."/>
            <person name="Unseld M."/>
            <person name="Fartmann B."/>
            <person name="Valle G."/>
            <person name="Bloecker H."/>
            <person name="Perez-Alonso M."/>
            <person name="Obermaier B."/>
            <person name="Delseny M."/>
            <person name="Boutry M."/>
            <person name="Grivell L.A."/>
            <person name="Mache R."/>
            <person name="Puigdomenech P."/>
            <person name="De Simone V."/>
            <person name="Choisne N."/>
            <person name="Artiguenave F."/>
            <person name="Robert C."/>
            <person name="Brottier P."/>
            <person name="Wincker P."/>
            <person name="Cattolico L."/>
            <person name="Weissenbach J."/>
            <person name="Saurin W."/>
            <person name="Quetier F."/>
            <person name="Schaefer M."/>
            <person name="Mueller-Auer S."/>
            <person name="Gabel C."/>
            <person name="Fuchs M."/>
            <person name="Benes V."/>
            <person name="Wurmbach E."/>
            <person name="Drzonek H."/>
            <person name="Erfle H."/>
            <person name="Jordan N."/>
            <person name="Bangert S."/>
            <person name="Wiedelmann R."/>
            <person name="Kranz H."/>
            <person name="Voss H."/>
            <person name="Holland R."/>
            <person name="Brandt P."/>
            <person name="Nyakatura G."/>
            <person name="Vezzi A."/>
            <person name="D'Angelo M."/>
            <person name="Pallavicini A."/>
            <person name="Toppo S."/>
            <person name="Simionati B."/>
            <person name="Conrad A."/>
            <person name="Hornischer K."/>
            <person name="Kauer G."/>
            <person name="Loehnert T.-H."/>
            <person name="Nordsiek G."/>
            <person name="Reichelt J."/>
            <person name="Scharfe M."/>
            <person name="Schoen O."/>
            <person name="Bargues M."/>
            <person name="Terol J."/>
            <person name="Climent J."/>
            <person name="Navarro P."/>
            <person name="Collado C."/>
            <person name="Perez-Perez A."/>
            <person name="Ottenwaelder B."/>
            <person name="Duchemin D."/>
            <person name="Cooke R."/>
            <person name="Laudie M."/>
            <person name="Berger-Llauro C."/>
            <person name="Purnelle B."/>
            <person name="Masuy D."/>
            <person name="de Haan M."/>
            <person name="Maarse A.C."/>
            <person name="Alcaraz J.-P."/>
            <person name="Cottet A."/>
            <person name="Casacuberta E."/>
            <person name="Monfort A."/>
            <person name="Argiriou A."/>
            <person name="Flores M."/>
            <person name="Liguori R."/>
            <person name="Vitale D."/>
            <person name="Mannhaupt G."/>
            <person name="Haase D."/>
            <person name="Schoof H."/>
            <person name="Rudd S."/>
            <person name="Zaccaria P."/>
            <person name="Mewes H.-W."/>
            <person name="Mayer K.F.X."/>
            <person name="Kaul S."/>
            <person name="Town C.D."/>
            <person name="Koo H.L."/>
            <person name="Tallon L.J."/>
            <person name="Jenkins J."/>
            <person name="Rooney T."/>
            <person name="Rizzo M."/>
            <person name="Walts A."/>
            <person name="Utterback T."/>
            <person name="Fujii C.Y."/>
            <person name="Shea T.P."/>
            <person name="Creasy T.H."/>
            <person name="Haas B."/>
            <person name="Maiti R."/>
            <person name="Wu D."/>
            <person name="Peterson J."/>
            <person name="Van Aken S."/>
            <person name="Pai G."/>
            <person name="Militscher J."/>
            <person name="Sellers P."/>
            <person name="Gill J.E."/>
            <person name="Feldblyum T.V."/>
            <person name="Preuss D."/>
            <person name="Lin X."/>
            <person name="Nierman W.C."/>
            <person name="Salzberg S.L."/>
            <person name="White O."/>
            <person name="Venter J.C."/>
            <person name="Fraser C.M."/>
            <person name="Kaneko T."/>
            <person name="Nakamura Y."/>
            <person name="Sato S."/>
            <person name="Kato T."/>
            <person name="Asamizu E."/>
            <person name="Sasamoto S."/>
            <person name="Kimura T."/>
            <person name="Idesawa K."/>
            <person name="Kawashima K."/>
            <person name="Kishida Y."/>
            <person name="Kiyokawa C."/>
            <person name="Kohara M."/>
            <person name="Matsumoto M."/>
            <person name="Matsuno A."/>
            <person name="Muraki A."/>
            <person name="Nakayama S."/>
            <person name="Nakazaki N."/>
            <person name="Shinpo S."/>
            <person name="Takeuchi C."/>
            <person name="Wada T."/>
            <person name="Watanabe A."/>
            <person name="Yamada M."/>
            <person name="Yasuda M."/>
            <person name="Tabata S."/>
        </authorList>
    </citation>
    <scope>NUCLEOTIDE SEQUENCE [LARGE SCALE GENOMIC DNA]</scope>
    <source>
        <strain>cv. Columbia</strain>
    </source>
</reference>
<reference key="2">
    <citation type="journal article" date="2017" name="Plant J.">
        <title>Araport11: a complete reannotation of the Arabidopsis thaliana reference genome.</title>
        <authorList>
            <person name="Cheng C.Y."/>
            <person name="Krishnakumar V."/>
            <person name="Chan A.P."/>
            <person name="Thibaud-Nissen F."/>
            <person name="Schobel S."/>
            <person name="Town C.D."/>
        </authorList>
    </citation>
    <scope>GENOME REANNOTATION</scope>
    <source>
        <strain>cv. Columbia</strain>
    </source>
</reference>
<reference key="3">
    <citation type="journal article" date="2014" name="Mitochondrion">
        <title>Mitochondrial 2-hydroxyglutarate metabolism.</title>
        <authorList>
            <person name="Engqvist M.K."/>
            <person name="Esser C."/>
            <person name="Maier A."/>
            <person name="Lercher M.J."/>
            <person name="Maurino V.G."/>
        </authorList>
    </citation>
    <scope>SUBCELLULAR LOCATION</scope>
</reference>
<reference key="4">
    <citation type="journal article" date="2015" name="Plant Cell Physiol.">
        <title>Plants possess a cyclic mitochondrial metabolic pathway similar to the mammalian metabolic repair mechanism involving malate dehydrogenase and l-2-hydroxyglutarate dehydrogenase.</title>
        <authorList>
            <person name="Huedig M."/>
            <person name="Maier A."/>
            <person name="Scherrers I."/>
            <person name="Seidel L."/>
            <person name="Jansen E.E."/>
            <person name="Mettler-Altmann T."/>
            <person name="Engqvist M.K."/>
            <person name="Maurino V.G."/>
        </authorList>
    </citation>
    <scope>FUNCTION</scope>
    <scope>CATALYTIC ACTIVITY</scope>
    <scope>COFACTOR</scope>
    <scope>BIOPHYSICOCHEMICAL PROPERTIES</scope>
    <scope>DISRUPTION PHENOTYPE</scope>
</reference>